<accession>Q6PHS6</accession>
<gene>
    <name type="primary">Snx13</name>
</gene>
<comment type="function">
    <text evidence="1 5">May be involved in several stages of intracellular trafficking. Acts as a GAP for Galphas (By similarity). May play a role in endosome homeostasis.</text>
</comment>
<comment type="subcellular location">
    <subcellularLocation>
        <location evidence="1">Early endosome membrane</location>
        <topology evidence="1">Peripheral membrane protein</topology>
        <orientation evidence="1">Cytoplasmic side</orientation>
    </subcellularLocation>
</comment>
<comment type="domain">
    <text evidence="1">The PX domain mediates interaction with membranes enriched in phosphatidylinositol 3-phosphate.</text>
</comment>
<comment type="disruption phenotype">
    <text evidence="5">Embryonic lethal. After 8.5 dpc, embryos are smaller, show failure of neural tube closure and abnormal cephalic vascularization. None survive after 14.5 dpc. Visceral yolk sac endoderm cells contain large autophagic vacuoles.</text>
</comment>
<comment type="similarity">
    <text evidence="6">Belongs to the sorting nexin family.</text>
</comment>
<dbReference type="EMBL" id="BC056394">
    <property type="protein sequence ID" value="AAH56394.1"/>
    <property type="molecule type" value="mRNA"/>
</dbReference>
<dbReference type="CCDS" id="CCDS56837.1"/>
<dbReference type="RefSeq" id="NP_001014973.3">
    <property type="nucleotide sequence ID" value="NM_001014973.3"/>
</dbReference>
<dbReference type="SMR" id="Q6PHS6"/>
<dbReference type="BioGRID" id="229917">
    <property type="interactions" value="1"/>
</dbReference>
<dbReference type="FunCoup" id="Q6PHS6">
    <property type="interactions" value="2206"/>
</dbReference>
<dbReference type="STRING" id="10090.ENSMUSP00000038430"/>
<dbReference type="GlyGen" id="Q6PHS6">
    <property type="glycosylation" value="2 sites, 1 N-linked glycan (1 site)"/>
</dbReference>
<dbReference type="iPTMnet" id="Q6PHS6"/>
<dbReference type="PhosphoSitePlus" id="Q6PHS6"/>
<dbReference type="PaxDb" id="10090-ENSMUSP00000038430"/>
<dbReference type="ProteomicsDB" id="261539"/>
<dbReference type="Pumba" id="Q6PHS6"/>
<dbReference type="DNASU" id="217463"/>
<dbReference type="Ensembl" id="ENSMUST00000048519.17">
    <property type="protein sequence ID" value="ENSMUSP00000038430.11"/>
    <property type="gene ID" value="ENSMUSG00000020590.17"/>
</dbReference>
<dbReference type="GeneID" id="217463"/>
<dbReference type="KEGG" id="mmu:217463"/>
<dbReference type="UCSC" id="uc011yli.1">
    <property type="organism name" value="mouse"/>
</dbReference>
<dbReference type="AGR" id="MGI:2661416"/>
<dbReference type="CTD" id="23161"/>
<dbReference type="MGI" id="MGI:2661416">
    <property type="gene designation" value="Snx13"/>
</dbReference>
<dbReference type="eggNOG" id="KOG2101">
    <property type="taxonomic scope" value="Eukaryota"/>
</dbReference>
<dbReference type="GeneTree" id="ENSGT00950000182856"/>
<dbReference type="InParanoid" id="Q6PHS6"/>
<dbReference type="OMA" id="CETINNT"/>
<dbReference type="OrthoDB" id="5772781at2759"/>
<dbReference type="PhylomeDB" id="Q6PHS6"/>
<dbReference type="BioGRID-ORCS" id="217463">
    <property type="hits" value="2 hits in 77 CRISPR screens"/>
</dbReference>
<dbReference type="ChiTaRS" id="Snx13">
    <property type="organism name" value="mouse"/>
</dbReference>
<dbReference type="PRO" id="PR:Q6PHS6"/>
<dbReference type="Proteomes" id="UP000000589">
    <property type="component" value="Chromosome 12"/>
</dbReference>
<dbReference type="RNAct" id="Q6PHS6">
    <property type="molecule type" value="protein"/>
</dbReference>
<dbReference type="GO" id="GO:0031901">
    <property type="term" value="C:early endosome membrane"/>
    <property type="evidence" value="ECO:0007669"/>
    <property type="project" value="UniProtKB-SubCell"/>
</dbReference>
<dbReference type="GO" id="GO:0032266">
    <property type="term" value="F:phosphatidylinositol-3-phosphate binding"/>
    <property type="evidence" value="ECO:0007669"/>
    <property type="project" value="Ensembl"/>
</dbReference>
<dbReference type="GO" id="GO:0006886">
    <property type="term" value="P:intracellular protein transport"/>
    <property type="evidence" value="ECO:0007669"/>
    <property type="project" value="Ensembl"/>
</dbReference>
<dbReference type="GO" id="GO:0009968">
    <property type="term" value="P:negative regulation of signal transduction"/>
    <property type="evidence" value="ECO:0007669"/>
    <property type="project" value="UniProtKB-KW"/>
</dbReference>
<dbReference type="CDD" id="cd06873">
    <property type="entry name" value="PX_SNX13"/>
    <property type="match status" value="1"/>
</dbReference>
<dbReference type="CDD" id="cd08719">
    <property type="entry name" value="RGS_SNX13"/>
    <property type="match status" value="1"/>
</dbReference>
<dbReference type="FunFam" id="3.30.1520.10:FF:000014">
    <property type="entry name" value="Sorting nexin 13"/>
    <property type="match status" value="1"/>
</dbReference>
<dbReference type="FunFam" id="1.10.167.10:FF:000007">
    <property type="entry name" value="sorting nexin-13 isoform X1"/>
    <property type="match status" value="1"/>
</dbReference>
<dbReference type="Gene3D" id="3.30.1520.10">
    <property type="entry name" value="Phox-like domain"/>
    <property type="match status" value="1"/>
</dbReference>
<dbReference type="Gene3D" id="1.10.167.10">
    <property type="entry name" value="Regulator of G-protein Signalling 4, domain 2"/>
    <property type="match status" value="1"/>
</dbReference>
<dbReference type="InterPro" id="IPR003114">
    <property type="entry name" value="Phox_assoc"/>
</dbReference>
<dbReference type="InterPro" id="IPR001683">
    <property type="entry name" value="PX_dom"/>
</dbReference>
<dbReference type="InterPro" id="IPR036871">
    <property type="entry name" value="PX_dom_sf"/>
</dbReference>
<dbReference type="InterPro" id="IPR016137">
    <property type="entry name" value="RGS"/>
</dbReference>
<dbReference type="InterPro" id="IPR036305">
    <property type="entry name" value="RGS_sf"/>
</dbReference>
<dbReference type="InterPro" id="IPR044926">
    <property type="entry name" value="RGS_subdomain_2"/>
</dbReference>
<dbReference type="InterPro" id="IPR037437">
    <property type="entry name" value="SNX13_PX"/>
</dbReference>
<dbReference type="InterPro" id="IPR037896">
    <property type="entry name" value="SNX13_RGS"/>
</dbReference>
<dbReference type="InterPro" id="IPR013937">
    <property type="entry name" value="Sorting_nexin_C"/>
</dbReference>
<dbReference type="PANTHER" id="PTHR22775">
    <property type="entry name" value="SORTING NEXIN"/>
    <property type="match status" value="1"/>
</dbReference>
<dbReference type="PANTHER" id="PTHR22775:SF3">
    <property type="entry name" value="SORTING NEXIN-13"/>
    <property type="match status" value="1"/>
</dbReference>
<dbReference type="Pfam" id="PF08628">
    <property type="entry name" value="Nexin_C"/>
    <property type="match status" value="1"/>
</dbReference>
<dbReference type="Pfam" id="PF00787">
    <property type="entry name" value="PX"/>
    <property type="match status" value="1"/>
</dbReference>
<dbReference type="Pfam" id="PF02194">
    <property type="entry name" value="PXA"/>
    <property type="match status" value="1"/>
</dbReference>
<dbReference type="Pfam" id="PF00615">
    <property type="entry name" value="RGS"/>
    <property type="match status" value="1"/>
</dbReference>
<dbReference type="SMART" id="SM00312">
    <property type="entry name" value="PX"/>
    <property type="match status" value="1"/>
</dbReference>
<dbReference type="SMART" id="SM00313">
    <property type="entry name" value="PXA"/>
    <property type="match status" value="1"/>
</dbReference>
<dbReference type="SMART" id="SM00315">
    <property type="entry name" value="RGS"/>
    <property type="match status" value="1"/>
</dbReference>
<dbReference type="SUPFAM" id="SSF64268">
    <property type="entry name" value="PX domain"/>
    <property type="match status" value="1"/>
</dbReference>
<dbReference type="SUPFAM" id="SSF48097">
    <property type="entry name" value="Regulator of G-protein signaling, RGS"/>
    <property type="match status" value="1"/>
</dbReference>
<dbReference type="PROSITE" id="PS50195">
    <property type="entry name" value="PX"/>
    <property type="match status" value="1"/>
</dbReference>
<dbReference type="PROSITE" id="PS51207">
    <property type="entry name" value="PXA"/>
    <property type="match status" value="1"/>
</dbReference>
<dbReference type="PROSITE" id="PS50132">
    <property type="entry name" value="RGS"/>
    <property type="match status" value="1"/>
</dbReference>
<name>SNX13_MOUSE</name>
<protein>
    <recommendedName>
        <fullName>Sorting nexin-13</fullName>
    </recommendedName>
</protein>
<evidence type="ECO:0000250" key="1"/>
<evidence type="ECO:0000255" key="2">
    <source>
        <dbReference type="PROSITE-ProRule" id="PRU00147"/>
    </source>
</evidence>
<evidence type="ECO:0000255" key="3">
    <source>
        <dbReference type="PROSITE-ProRule" id="PRU00171"/>
    </source>
</evidence>
<evidence type="ECO:0000255" key="4">
    <source>
        <dbReference type="PROSITE-ProRule" id="PRU00553"/>
    </source>
</evidence>
<evidence type="ECO:0000269" key="5">
    <source>
    </source>
</evidence>
<evidence type="ECO:0000305" key="6"/>
<organism>
    <name type="scientific">Mus musculus</name>
    <name type="common">Mouse</name>
    <dbReference type="NCBI Taxonomy" id="10090"/>
    <lineage>
        <taxon>Eukaryota</taxon>
        <taxon>Metazoa</taxon>
        <taxon>Chordata</taxon>
        <taxon>Craniata</taxon>
        <taxon>Vertebrata</taxon>
        <taxon>Euteleostomi</taxon>
        <taxon>Mammalia</taxon>
        <taxon>Eutheria</taxon>
        <taxon>Euarchontoglires</taxon>
        <taxon>Glires</taxon>
        <taxon>Rodentia</taxon>
        <taxon>Myomorpha</taxon>
        <taxon>Muroidea</taxon>
        <taxon>Muridae</taxon>
        <taxon>Murinae</taxon>
        <taxon>Mus</taxon>
        <taxon>Mus</taxon>
    </lineage>
</organism>
<proteinExistence type="evidence at transcript level"/>
<reference key="1">
    <citation type="journal article" date="2004" name="Genome Res.">
        <title>The status, quality, and expansion of the NIH full-length cDNA project: the Mammalian Gene Collection (MGC).</title>
        <authorList>
            <consortium name="The MGC Project Team"/>
        </authorList>
    </citation>
    <scope>NUCLEOTIDE SEQUENCE [LARGE SCALE MRNA]</scope>
    <source>
        <strain>C57BL/6J</strain>
        <tissue>Brain</tissue>
    </source>
</reference>
<reference key="2">
    <citation type="journal article" date="2006" name="Proc. Natl. Acad. Sci. U.S.A.">
        <title>Essential role of RGS-PX1/sorting nexin 13 in mouse development and regulation of endocytosis dynamics.</title>
        <authorList>
            <person name="Zheng B."/>
            <person name="Tang T."/>
            <person name="Tang N."/>
            <person name="Kudlicka K."/>
            <person name="Ohtsubo K."/>
            <person name="Ma P."/>
            <person name="Marth J.D."/>
            <person name="Farquhar M.G."/>
            <person name="Lehtonen E."/>
        </authorList>
    </citation>
    <scope>FUNCTION</scope>
    <scope>DISRUPTION PHENOTYPE</scope>
</reference>
<keyword id="KW-0967">Endosome</keyword>
<keyword id="KW-0446">Lipid-binding</keyword>
<keyword id="KW-0472">Membrane</keyword>
<keyword id="KW-0653">Protein transport</keyword>
<keyword id="KW-1185">Reference proteome</keyword>
<keyword id="KW-0734">Signal transduction inhibitor</keyword>
<keyword id="KW-0813">Transport</keyword>
<feature type="chain" id="PRO_0000236200" description="Sorting nexin-13">
    <location>
        <begin position="1"/>
        <end position="957"/>
    </location>
</feature>
<feature type="domain" description="PXA" evidence="2 4">
    <location>
        <begin position="97"/>
        <end position="284"/>
    </location>
</feature>
<feature type="domain" description="RGS" evidence="3">
    <location>
        <begin position="373"/>
        <end position="511"/>
    </location>
</feature>
<feature type="domain" description="PX" evidence="2">
    <location>
        <begin position="559"/>
        <end position="680"/>
    </location>
</feature>
<feature type="binding site" evidence="1">
    <location>
        <position position="601"/>
    </location>
    <ligand>
        <name>a 1,2-diacyl-sn-glycero-3-phospho-(1D-myo-inositol-3-phosphate)</name>
        <dbReference type="ChEBI" id="CHEBI:58088"/>
    </ligand>
</feature>
<feature type="binding site" evidence="1">
    <location>
        <position position="603"/>
    </location>
    <ligand>
        <name>a 1,2-diacyl-sn-glycero-3-phospho-(1D-myo-inositol-3-phosphate)</name>
        <dbReference type="ChEBI" id="CHEBI:58088"/>
    </ligand>
</feature>
<feature type="binding site" evidence="1">
    <location>
        <position position="628"/>
    </location>
    <ligand>
        <name>a 1,2-diacyl-sn-glycero-3-phospho-(1D-myo-inositol-3-phosphate)</name>
        <dbReference type="ChEBI" id="CHEBI:58088"/>
    </ligand>
</feature>
<feature type="binding site" evidence="1">
    <location>
        <position position="642"/>
    </location>
    <ligand>
        <name>a 1,2-diacyl-sn-glycero-3-phospho-(1D-myo-inositol-3-phosphate)</name>
        <dbReference type="ChEBI" id="CHEBI:58088"/>
    </ligand>
</feature>
<sequence>MLTEASLSIWGWGSLGIVLFLITFGPFVIFYLAFYILCFVGGGLVVTLLYGKTNSEKYLEQCEHSFLPPTSSGVPKCLEEMKREARTIKIDRRLTGANIIDEPLQQVIQFSLRDYVQYWYYTLSDDESFLLEIRQTLQNALIQFATRSKEIDWQPYFTTRIVDDFGTHLRVFRKAQQRVTEKDDQVKGTAEDLVETFFEVEVEMEKDVCRDLVCTSPKDEEGFLRDLCEVLLYLLLPPGDFQSKIMRYFVREILARGILLPLINQLSDPDYINQYVIWMIRDSNCNYEAFMNIIKLSDNIGELEAVRDKAAEELQYLRSLDTAGDDINTIKNQINSLLFVKKVCDSRIQRLQSGKEINTVKLAANFGKLCTVPLDSILVDNVALQFFMDYMQQTGGQAHLFFWMTVEGYRVTAQQQLEVLSGRQRDGKQQTNQTKGLLRAAAVGIYEQYLSEKASPRVTVDDYLVAKLADTLNHEDPTPEIFDDIQRKVYELMLRDERFYPSFRQNALYVRMLAELDMLKDPSFRGSDDGDGESFNGSPTGSINLSLDDLSSVTSDDSVQLHAYISDTGVCNDHGKTYALYAITVHRRNLNTEEMWKTYRRYSDFHDFHMRITEQFENLSSILKLPGKKTFNNMDRDFLEKRKKDLNAYLQLLLTPEMMKASPALAHCVYDFLENKAYSKGKGDFARKMDTFVNPLRNSMRNVSNAVKSLPDSLAEGVTKMSDNVGRMSERLGQDIKQSFFKVPPLITKTDSDPEHCRVSAQLDDNVDDNIPLRVMLLLMDEVFDLKERNQWLRRNIKNLLQQLIRATYGDTINRKIVDHVDWMTSPEQVADSVKRFRDAFWPNGILAETVPCRDKAIRMRTRIAGKTKLFAIMPDELKHIIGAETTRKGILRVFEMFQHNQLNRRMVYVFLEGFLETLFPQYKFRELFNKLHSRSKQMQKYKQKLQSTQAPSLQKR</sequence>